<proteinExistence type="inferred from homology"/>
<reference key="1">
    <citation type="journal article" date="2001" name="Nature">
        <title>Complete genome sequence of Salmonella enterica serovar Typhimurium LT2.</title>
        <authorList>
            <person name="McClelland M."/>
            <person name="Sanderson K.E."/>
            <person name="Spieth J."/>
            <person name="Clifton S.W."/>
            <person name="Latreille P."/>
            <person name="Courtney L."/>
            <person name="Porwollik S."/>
            <person name="Ali J."/>
            <person name="Dante M."/>
            <person name="Du F."/>
            <person name="Hou S."/>
            <person name="Layman D."/>
            <person name="Leonard S."/>
            <person name="Nguyen C."/>
            <person name="Scott K."/>
            <person name="Holmes A."/>
            <person name="Grewal N."/>
            <person name="Mulvaney E."/>
            <person name="Ryan E."/>
            <person name="Sun H."/>
            <person name="Florea L."/>
            <person name="Miller W."/>
            <person name="Stoneking T."/>
            <person name="Nhan M."/>
            <person name="Waterston R."/>
            <person name="Wilson R.K."/>
        </authorList>
    </citation>
    <scope>NUCLEOTIDE SEQUENCE [LARGE SCALE GENOMIC DNA]</scope>
    <source>
        <strain>LT2 / SGSC1412 / ATCC 700720</strain>
    </source>
</reference>
<comment type="function">
    <text evidence="1">One of the primary rRNA binding proteins, it binds directly near the 3'-end of the 23S rRNA, where it nucleates assembly of the 50S subunit.</text>
</comment>
<comment type="subunit">
    <text evidence="1">Part of the 50S ribosomal subunit. Forms a cluster with proteins L14 and L19.</text>
</comment>
<comment type="PTM">
    <text evidence="1">Methylated by PrmB.</text>
</comment>
<comment type="similarity">
    <text evidence="1">Belongs to the universal ribosomal protein uL3 family.</text>
</comment>
<sequence length="209" mass="22248">MIGLVGKKVGMTRIFTEDGVSIPVTVIEVEANRVTQVKDLANDGYRAVQVTTGAKKANRVTKPEAGHFAKAGVEAGRGLWEFRLAEGEEYTVGQSISVELFADVKKVDVTGTSKGKGFAGTVKRWNFRTQDATHGNSLSHRVPGSIGQNQTPGKVFKGKKMAGQMGNERVTVQSLDVVRVDAERNLLLVKGGVPGATGCDLIVKPAVKA</sequence>
<keyword id="KW-0488">Methylation</keyword>
<keyword id="KW-1185">Reference proteome</keyword>
<keyword id="KW-0687">Ribonucleoprotein</keyword>
<keyword id="KW-0689">Ribosomal protein</keyword>
<keyword id="KW-0694">RNA-binding</keyword>
<keyword id="KW-0699">rRNA-binding</keyword>
<feature type="chain" id="PRO_0000077149" description="Large ribosomal subunit protein uL3">
    <location>
        <begin position="1"/>
        <end position="209"/>
    </location>
</feature>
<feature type="modified residue" description="N5-methylglutamine" evidence="1">
    <location>
        <position position="150"/>
    </location>
</feature>
<dbReference type="EMBL" id="AE006468">
    <property type="protein sequence ID" value="AAL22303.1"/>
    <property type="molecule type" value="Genomic_DNA"/>
</dbReference>
<dbReference type="RefSeq" id="NP_462344.1">
    <property type="nucleotide sequence ID" value="NC_003197.2"/>
</dbReference>
<dbReference type="RefSeq" id="WP_000579838.1">
    <property type="nucleotide sequence ID" value="NC_003197.2"/>
</dbReference>
<dbReference type="SMR" id="P60446"/>
<dbReference type="STRING" id="99287.STM3440"/>
<dbReference type="PaxDb" id="99287-STM3440"/>
<dbReference type="GeneID" id="1254963"/>
<dbReference type="KEGG" id="stm:STM3440"/>
<dbReference type="PATRIC" id="fig|99287.12.peg.3637"/>
<dbReference type="HOGENOM" id="CLU_044142_4_1_6"/>
<dbReference type="OMA" id="GKNIPCT"/>
<dbReference type="PhylomeDB" id="P60446"/>
<dbReference type="BioCyc" id="SENT99287:STM3440-MONOMER"/>
<dbReference type="Proteomes" id="UP000001014">
    <property type="component" value="Chromosome"/>
</dbReference>
<dbReference type="GO" id="GO:0022625">
    <property type="term" value="C:cytosolic large ribosomal subunit"/>
    <property type="evidence" value="ECO:0000318"/>
    <property type="project" value="GO_Central"/>
</dbReference>
<dbReference type="GO" id="GO:0019843">
    <property type="term" value="F:rRNA binding"/>
    <property type="evidence" value="ECO:0007669"/>
    <property type="project" value="UniProtKB-UniRule"/>
</dbReference>
<dbReference type="GO" id="GO:0003735">
    <property type="term" value="F:structural constituent of ribosome"/>
    <property type="evidence" value="ECO:0000318"/>
    <property type="project" value="GO_Central"/>
</dbReference>
<dbReference type="GO" id="GO:0006412">
    <property type="term" value="P:translation"/>
    <property type="evidence" value="ECO:0007669"/>
    <property type="project" value="UniProtKB-UniRule"/>
</dbReference>
<dbReference type="FunFam" id="2.40.30.10:FF:000004">
    <property type="entry name" value="50S ribosomal protein L3"/>
    <property type="match status" value="1"/>
</dbReference>
<dbReference type="FunFam" id="3.30.160.810:FF:000001">
    <property type="entry name" value="50S ribosomal protein L3"/>
    <property type="match status" value="1"/>
</dbReference>
<dbReference type="Gene3D" id="3.30.160.810">
    <property type="match status" value="1"/>
</dbReference>
<dbReference type="Gene3D" id="2.40.30.10">
    <property type="entry name" value="Translation factors"/>
    <property type="match status" value="1"/>
</dbReference>
<dbReference type="HAMAP" id="MF_01325_B">
    <property type="entry name" value="Ribosomal_uL3_B"/>
    <property type="match status" value="1"/>
</dbReference>
<dbReference type="InterPro" id="IPR000597">
    <property type="entry name" value="Ribosomal_uL3"/>
</dbReference>
<dbReference type="InterPro" id="IPR019927">
    <property type="entry name" value="Ribosomal_uL3_bac/org-type"/>
</dbReference>
<dbReference type="InterPro" id="IPR019926">
    <property type="entry name" value="Ribosomal_uL3_CS"/>
</dbReference>
<dbReference type="InterPro" id="IPR009000">
    <property type="entry name" value="Transl_B-barrel_sf"/>
</dbReference>
<dbReference type="NCBIfam" id="TIGR03625">
    <property type="entry name" value="L3_bact"/>
    <property type="match status" value="1"/>
</dbReference>
<dbReference type="PANTHER" id="PTHR11229">
    <property type="entry name" value="50S RIBOSOMAL PROTEIN L3"/>
    <property type="match status" value="1"/>
</dbReference>
<dbReference type="PANTHER" id="PTHR11229:SF16">
    <property type="entry name" value="LARGE RIBOSOMAL SUBUNIT PROTEIN UL3C"/>
    <property type="match status" value="1"/>
</dbReference>
<dbReference type="Pfam" id="PF00297">
    <property type="entry name" value="Ribosomal_L3"/>
    <property type="match status" value="1"/>
</dbReference>
<dbReference type="SUPFAM" id="SSF50447">
    <property type="entry name" value="Translation proteins"/>
    <property type="match status" value="1"/>
</dbReference>
<dbReference type="PROSITE" id="PS00474">
    <property type="entry name" value="RIBOSOMAL_L3"/>
    <property type="match status" value="1"/>
</dbReference>
<gene>
    <name evidence="1" type="primary">rplC</name>
    <name type="ordered locus">STM3440</name>
</gene>
<evidence type="ECO:0000255" key="1">
    <source>
        <dbReference type="HAMAP-Rule" id="MF_01325"/>
    </source>
</evidence>
<evidence type="ECO:0000305" key="2"/>
<organism>
    <name type="scientific">Salmonella typhimurium (strain LT2 / SGSC1412 / ATCC 700720)</name>
    <dbReference type="NCBI Taxonomy" id="99287"/>
    <lineage>
        <taxon>Bacteria</taxon>
        <taxon>Pseudomonadati</taxon>
        <taxon>Pseudomonadota</taxon>
        <taxon>Gammaproteobacteria</taxon>
        <taxon>Enterobacterales</taxon>
        <taxon>Enterobacteriaceae</taxon>
        <taxon>Salmonella</taxon>
    </lineage>
</organism>
<protein>
    <recommendedName>
        <fullName evidence="1">Large ribosomal subunit protein uL3</fullName>
    </recommendedName>
    <alternativeName>
        <fullName evidence="2">50S ribosomal protein L3</fullName>
    </alternativeName>
</protein>
<name>RL3_SALTY</name>
<accession>P60446</accession>
<accession>Q8XH20</accession>